<dbReference type="EMBL" id="AP007281">
    <property type="protein sequence ID" value="BAG25885.1"/>
    <property type="molecule type" value="Genomic_DNA"/>
</dbReference>
<dbReference type="RefSeq" id="WP_003664532.1">
    <property type="nucleotide sequence ID" value="NC_010609.1"/>
</dbReference>
<dbReference type="SMR" id="B2G8V3"/>
<dbReference type="GeneID" id="78174232"/>
<dbReference type="KEGG" id="lrf:LAR_1369"/>
<dbReference type="HOGENOM" id="CLU_072439_5_0_9"/>
<dbReference type="GO" id="GO:1990904">
    <property type="term" value="C:ribonucleoprotein complex"/>
    <property type="evidence" value="ECO:0007669"/>
    <property type="project" value="UniProtKB-KW"/>
</dbReference>
<dbReference type="GO" id="GO:0005840">
    <property type="term" value="C:ribosome"/>
    <property type="evidence" value="ECO:0007669"/>
    <property type="project" value="UniProtKB-KW"/>
</dbReference>
<dbReference type="GO" id="GO:0019843">
    <property type="term" value="F:rRNA binding"/>
    <property type="evidence" value="ECO:0007669"/>
    <property type="project" value="UniProtKB-UniRule"/>
</dbReference>
<dbReference type="GO" id="GO:0003735">
    <property type="term" value="F:structural constituent of ribosome"/>
    <property type="evidence" value="ECO:0007669"/>
    <property type="project" value="InterPro"/>
</dbReference>
<dbReference type="GO" id="GO:0006412">
    <property type="term" value="P:translation"/>
    <property type="evidence" value="ECO:0007669"/>
    <property type="project" value="UniProtKB-UniRule"/>
</dbReference>
<dbReference type="FunFam" id="3.30.420.80:FF:000001">
    <property type="entry name" value="30S ribosomal protein S11"/>
    <property type="match status" value="1"/>
</dbReference>
<dbReference type="Gene3D" id="3.30.420.80">
    <property type="entry name" value="Ribosomal protein S11"/>
    <property type="match status" value="1"/>
</dbReference>
<dbReference type="HAMAP" id="MF_01310">
    <property type="entry name" value="Ribosomal_uS11"/>
    <property type="match status" value="1"/>
</dbReference>
<dbReference type="InterPro" id="IPR001971">
    <property type="entry name" value="Ribosomal_uS11"/>
</dbReference>
<dbReference type="InterPro" id="IPR019981">
    <property type="entry name" value="Ribosomal_uS11_bac-type"/>
</dbReference>
<dbReference type="InterPro" id="IPR018102">
    <property type="entry name" value="Ribosomal_uS11_CS"/>
</dbReference>
<dbReference type="InterPro" id="IPR036967">
    <property type="entry name" value="Ribosomal_uS11_sf"/>
</dbReference>
<dbReference type="NCBIfam" id="NF003698">
    <property type="entry name" value="PRK05309.1"/>
    <property type="match status" value="1"/>
</dbReference>
<dbReference type="NCBIfam" id="TIGR03632">
    <property type="entry name" value="uS11_bact"/>
    <property type="match status" value="1"/>
</dbReference>
<dbReference type="PANTHER" id="PTHR11759">
    <property type="entry name" value="40S RIBOSOMAL PROTEIN S14/30S RIBOSOMAL PROTEIN S11"/>
    <property type="match status" value="1"/>
</dbReference>
<dbReference type="Pfam" id="PF00411">
    <property type="entry name" value="Ribosomal_S11"/>
    <property type="match status" value="1"/>
</dbReference>
<dbReference type="PIRSF" id="PIRSF002131">
    <property type="entry name" value="Ribosomal_S11"/>
    <property type="match status" value="1"/>
</dbReference>
<dbReference type="SUPFAM" id="SSF53137">
    <property type="entry name" value="Translational machinery components"/>
    <property type="match status" value="1"/>
</dbReference>
<dbReference type="PROSITE" id="PS00054">
    <property type="entry name" value="RIBOSOMAL_S11"/>
    <property type="match status" value="1"/>
</dbReference>
<reference key="1">
    <citation type="journal article" date="2008" name="DNA Res.">
        <title>Comparative genome analysis of Lactobacillus reuteri and Lactobacillus fermentum reveal a genomic island for reuterin and cobalamin production.</title>
        <authorList>
            <person name="Morita H."/>
            <person name="Toh H."/>
            <person name="Fukuda S."/>
            <person name="Horikawa H."/>
            <person name="Oshima K."/>
            <person name="Suzuki T."/>
            <person name="Murakami M."/>
            <person name="Hisamatsu S."/>
            <person name="Kato Y."/>
            <person name="Takizawa T."/>
            <person name="Fukuoka H."/>
            <person name="Yoshimura T."/>
            <person name="Itoh K."/>
            <person name="O'Sullivan D.J."/>
            <person name="McKay L.L."/>
            <person name="Ohno H."/>
            <person name="Kikuchi J."/>
            <person name="Masaoka T."/>
            <person name="Hattori M."/>
        </authorList>
    </citation>
    <scope>NUCLEOTIDE SEQUENCE [LARGE SCALE GENOMIC DNA]</scope>
    <source>
        <strain>JCM 1112</strain>
    </source>
</reference>
<organism>
    <name type="scientific">Limosilactobacillus reuteri subsp. reuteri (strain JCM 1112)</name>
    <name type="common">Lactobacillus reuteri</name>
    <dbReference type="NCBI Taxonomy" id="557433"/>
    <lineage>
        <taxon>Bacteria</taxon>
        <taxon>Bacillati</taxon>
        <taxon>Bacillota</taxon>
        <taxon>Bacilli</taxon>
        <taxon>Lactobacillales</taxon>
        <taxon>Lactobacillaceae</taxon>
        <taxon>Limosilactobacillus</taxon>
    </lineage>
</organism>
<protein>
    <recommendedName>
        <fullName evidence="1">Small ribosomal subunit protein uS11</fullName>
    </recommendedName>
    <alternativeName>
        <fullName evidence="2">30S ribosomal protein S11</fullName>
    </alternativeName>
</protein>
<accession>B2G8V3</accession>
<keyword id="KW-0687">Ribonucleoprotein</keyword>
<keyword id="KW-0689">Ribosomal protein</keyword>
<keyword id="KW-0694">RNA-binding</keyword>
<keyword id="KW-0699">rRNA-binding</keyword>
<evidence type="ECO:0000255" key="1">
    <source>
        <dbReference type="HAMAP-Rule" id="MF_01310"/>
    </source>
</evidence>
<evidence type="ECO:0000305" key="2"/>
<feature type="chain" id="PRO_1000141105" description="Small ribosomal subunit protein uS11">
    <location>
        <begin position="1"/>
        <end position="129"/>
    </location>
</feature>
<proteinExistence type="inferred from homology"/>
<comment type="function">
    <text evidence="1">Located on the platform of the 30S subunit, it bridges several disparate RNA helices of the 16S rRNA. Forms part of the Shine-Dalgarno cleft in the 70S ribosome.</text>
</comment>
<comment type="subunit">
    <text evidence="1">Part of the 30S ribosomal subunit. Interacts with proteins S7 and S18. Binds to IF-3.</text>
</comment>
<comment type="similarity">
    <text evidence="1">Belongs to the universal ribosomal protein uS11 family.</text>
</comment>
<name>RS11_LIMRJ</name>
<gene>
    <name evidence="1" type="primary">rpsK</name>
    <name type="ordered locus">LAR_1369</name>
</gene>
<sequence length="129" mass="13759">MATKKGTRKRRAKKNVETGVAHIHSTFNNTLIMITDVQGNAVAWSSAGVLGFKGSRKSTPFAAQMASEAAAKQAMEHGMKTVEVEVKGPGSGREAAIRALQATGLEVTAIRDVTPVPHNGSRPPKRRRV</sequence>